<feature type="signal peptide" evidence="2">
    <location>
        <begin position="1"/>
        <end position="19"/>
    </location>
</feature>
<feature type="chain" id="PRO_0000280609" description="Chitinase domain-containing protein 1">
    <location>
        <begin position="20"/>
        <end position="393"/>
    </location>
</feature>
<feature type="domain" description="GH18" evidence="3">
    <location>
        <begin position="79"/>
        <end position="393"/>
    </location>
</feature>
<feature type="splice variant" id="VSP_023827" description="In isoform 2." evidence="4">
    <location>
        <begin position="235"/>
        <end position="320"/>
    </location>
</feature>
<feature type="sequence conflict" description="In Ref. 1; BAE35662." evidence="5" ref="1">
    <original>W</original>
    <variation>R</variation>
    <location>
        <position position="334"/>
    </location>
</feature>
<name>CHID1_MOUSE</name>
<protein>
    <recommendedName>
        <fullName>Chitinase domain-containing protein 1</fullName>
    </recommendedName>
</protein>
<comment type="function">
    <text evidence="1">Saccharide- and LPS-binding protein with possible roles in pathogen sensing and endotoxin neutralization. Ligand-binding specificity relates to the length of the oligosaccharides, with preference for chitotetraose (in vitro) (By similarity).</text>
</comment>
<comment type="subunit">
    <text evidence="1">Interacts with STAB1.</text>
</comment>
<comment type="subcellular location">
    <subcellularLocation>
        <location>Secreted</location>
    </subcellularLocation>
    <subcellularLocation>
        <location evidence="1">Lysosome</location>
    </subcellularLocation>
</comment>
<comment type="alternative products">
    <event type="alternative splicing"/>
    <isoform>
        <id>Q922Q9-1</id>
        <name>1</name>
        <sequence type="displayed"/>
    </isoform>
    <isoform>
        <id>Q922Q9-2</id>
        <name>2</name>
        <sequence type="described" ref="VSP_023827"/>
    </isoform>
</comment>
<comment type="similarity">
    <text evidence="5">Belongs to the glycosyl hydrolase 18 family.</text>
</comment>
<comment type="sequence caution" evidence="5">
    <conflict type="erroneous initiation">
        <sequence resource="EMBL-CDS" id="AAH61063"/>
    </conflict>
</comment>
<comment type="sequence caution" evidence="5">
    <conflict type="erroneous termination">
        <sequence resource="EMBL-CDS" id="BAB29142"/>
    </conflict>
    <text>Truncated C-terminus.</text>
</comment>
<comment type="sequence caution" evidence="5">
    <conflict type="erroneous initiation">
        <sequence resource="EMBL-CDS" id="BAC34365"/>
    </conflict>
</comment>
<comment type="sequence caution" evidence="5">
    <conflict type="erroneous initiation">
        <sequence resource="EMBL-CDS" id="BAE35662"/>
    </conflict>
</comment>
<organism>
    <name type="scientific">Mus musculus</name>
    <name type="common">Mouse</name>
    <dbReference type="NCBI Taxonomy" id="10090"/>
    <lineage>
        <taxon>Eukaryota</taxon>
        <taxon>Metazoa</taxon>
        <taxon>Chordata</taxon>
        <taxon>Craniata</taxon>
        <taxon>Vertebrata</taxon>
        <taxon>Euteleostomi</taxon>
        <taxon>Mammalia</taxon>
        <taxon>Eutheria</taxon>
        <taxon>Euarchontoglires</taxon>
        <taxon>Glires</taxon>
        <taxon>Rodentia</taxon>
        <taxon>Myomorpha</taxon>
        <taxon>Muroidea</taxon>
        <taxon>Muridae</taxon>
        <taxon>Murinae</taxon>
        <taxon>Mus</taxon>
        <taxon>Mus</taxon>
    </lineage>
</organism>
<sequence length="393" mass="44906">MWPLLHVLWLALVCGSVHTTLSKSDAKKAASKMLLEKTQFSDKPVQDRGLVVTDIKAEDVVLEHRSYCSSRARERNFAGEVLGYVTPWNSHGYDVAKVFGSKFTQISPVWLQLKRRGREMFEITGLHDVDQGWMRAVKKHAKGVRIVPRLLFEDWTYDDFRNVLDSEDEIEELSKTVAQVAKNQHFDGFVVEVWSQLLSQKHVGLIHMLTHLAEALHQARLLVILVIPPAVTPGTDQLGMFTHKEFEQLAPILDGFSLMTYDYSTSQQPGPNAPLSWIRACVQVLDPKSQWRSKILLGLNFYGMDYAASKDAREPVIGARYVQTLKDHRPRVVWDSQAAEHFFEYKKNRGGRHVVFYPTLKSLQVRLELARELGVGVSIWELGQGLDYFYDLL</sequence>
<keyword id="KW-0025">Alternative splicing</keyword>
<keyword id="KW-0391">Immunity</keyword>
<keyword id="KW-0399">Innate immunity</keyword>
<keyword id="KW-0458">Lysosome</keyword>
<keyword id="KW-1185">Reference proteome</keyword>
<keyword id="KW-0964">Secreted</keyword>
<keyword id="KW-0732">Signal</keyword>
<evidence type="ECO:0000250" key="1"/>
<evidence type="ECO:0000255" key="2"/>
<evidence type="ECO:0000255" key="3">
    <source>
        <dbReference type="PROSITE-ProRule" id="PRU01258"/>
    </source>
</evidence>
<evidence type="ECO:0000303" key="4">
    <source>
    </source>
</evidence>
<evidence type="ECO:0000305" key="5"/>
<proteinExistence type="evidence at protein level"/>
<accession>Q922Q9</accession>
<accession>Q3TVF7</accession>
<accession>Q6P8U4</accession>
<accession>Q8C7C5</accession>
<accession>Q9CXR7</accession>
<gene>
    <name type="primary">Chid1</name>
</gene>
<dbReference type="EMBL" id="AK014071">
    <property type="protein sequence ID" value="BAB29142.1"/>
    <property type="status" value="ALT_SEQ"/>
    <property type="molecule type" value="mRNA"/>
</dbReference>
<dbReference type="EMBL" id="AK050655">
    <property type="protein sequence ID" value="BAC34365.1"/>
    <property type="status" value="ALT_INIT"/>
    <property type="molecule type" value="mRNA"/>
</dbReference>
<dbReference type="EMBL" id="AK160156">
    <property type="protein sequence ID" value="BAE35662.1"/>
    <property type="status" value="ALT_INIT"/>
    <property type="molecule type" value="mRNA"/>
</dbReference>
<dbReference type="EMBL" id="BC006876">
    <property type="protein sequence ID" value="AAH06876.1"/>
    <property type="molecule type" value="mRNA"/>
</dbReference>
<dbReference type="EMBL" id="BC061063">
    <property type="protein sequence ID" value="AAH61063.1"/>
    <property type="status" value="ALT_INIT"/>
    <property type="molecule type" value="mRNA"/>
</dbReference>
<dbReference type="CCDS" id="CCDS22019.2">
    <molecule id="Q922Q9-2"/>
</dbReference>
<dbReference type="CCDS" id="CCDS52447.2">
    <molecule id="Q922Q9-1"/>
</dbReference>
<dbReference type="RefSeq" id="NP_001136153.2">
    <molecule id="Q922Q9-1"/>
    <property type="nucleotide sequence ID" value="NM_001142681.2"/>
</dbReference>
<dbReference type="RefSeq" id="NP_001356280.1">
    <molecule id="Q922Q9-1"/>
    <property type="nucleotide sequence ID" value="NM_001369351.1"/>
</dbReference>
<dbReference type="RefSeq" id="NP_001356281.1">
    <molecule id="Q922Q9-1"/>
    <property type="nucleotide sequence ID" value="NM_001369352.1"/>
</dbReference>
<dbReference type="RefSeq" id="NP_080798.2">
    <molecule id="Q922Q9-2"/>
    <property type="nucleotide sequence ID" value="NM_026522.5"/>
</dbReference>
<dbReference type="SMR" id="Q922Q9"/>
<dbReference type="BioGRID" id="212618">
    <property type="interactions" value="3"/>
</dbReference>
<dbReference type="FunCoup" id="Q922Q9">
    <property type="interactions" value="1352"/>
</dbReference>
<dbReference type="STRING" id="10090.ENSMUSP00000130360"/>
<dbReference type="GlyGen" id="Q922Q9">
    <property type="glycosylation" value="1 site"/>
</dbReference>
<dbReference type="iPTMnet" id="Q922Q9"/>
<dbReference type="PhosphoSitePlus" id="Q922Q9"/>
<dbReference type="SwissPalm" id="Q922Q9"/>
<dbReference type="PaxDb" id="10090-ENSMUSP00000130360"/>
<dbReference type="PeptideAtlas" id="Q922Q9"/>
<dbReference type="ProteomicsDB" id="281663">
    <molecule id="Q922Q9-1"/>
</dbReference>
<dbReference type="ProteomicsDB" id="281664">
    <molecule id="Q922Q9-2"/>
</dbReference>
<dbReference type="Pumba" id="Q922Q9"/>
<dbReference type="Antibodypedia" id="10139">
    <property type="antibodies" value="208 antibodies from 25 providers"/>
</dbReference>
<dbReference type="DNASU" id="68038"/>
<dbReference type="Ensembl" id="ENSMUST00000118694.8">
    <molecule id="Q922Q9-2"/>
    <property type="protein sequence ID" value="ENSMUSP00000112891.2"/>
    <property type="gene ID" value="ENSMUSG00000025512.16"/>
</dbReference>
<dbReference type="Ensembl" id="ENSMUST00000153191.8">
    <molecule id="Q922Q9-1"/>
    <property type="protein sequence ID" value="ENSMUSP00000114693.2"/>
    <property type="gene ID" value="ENSMUSG00000025512.16"/>
</dbReference>
<dbReference type="GeneID" id="68038"/>
<dbReference type="KEGG" id="mmu:68038"/>
<dbReference type="UCSC" id="uc009klp.2">
    <molecule id="Q922Q9-2"/>
    <property type="organism name" value="mouse"/>
</dbReference>
<dbReference type="UCSC" id="uc009klq.2">
    <molecule id="Q922Q9-1"/>
    <property type="organism name" value="mouse"/>
</dbReference>
<dbReference type="AGR" id="MGI:1915288"/>
<dbReference type="CTD" id="66005"/>
<dbReference type="MGI" id="MGI:1915288">
    <property type="gene designation" value="Chid1"/>
</dbReference>
<dbReference type="VEuPathDB" id="HostDB:ENSMUSG00000025512"/>
<dbReference type="eggNOG" id="KOG2091">
    <property type="taxonomic scope" value="Eukaryota"/>
</dbReference>
<dbReference type="GeneTree" id="ENSGT00390000012069"/>
<dbReference type="HOGENOM" id="CLU_035132_2_0_1"/>
<dbReference type="InParanoid" id="Q922Q9"/>
<dbReference type="OMA" id="YSINERI"/>
<dbReference type="OrthoDB" id="10254444at2759"/>
<dbReference type="PhylomeDB" id="Q922Q9"/>
<dbReference type="TreeFam" id="TF319271"/>
<dbReference type="Reactome" id="R-MMU-114608">
    <property type="pathway name" value="Platelet degranulation"/>
</dbReference>
<dbReference type="BioGRID-ORCS" id="68038">
    <property type="hits" value="0 hits in 77 CRISPR screens"/>
</dbReference>
<dbReference type="ChiTaRS" id="Chid1">
    <property type="organism name" value="mouse"/>
</dbReference>
<dbReference type="PRO" id="PR:Q922Q9"/>
<dbReference type="Proteomes" id="UP000000589">
    <property type="component" value="Chromosome 7"/>
</dbReference>
<dbReference type="RNAct" id="Q922Q9">
    <property type="molecule type" value="protein"/>
</dbReference>
<dbReference type="Bgee" id="ENSMUSG00000025512">
    <property type="expression patterns" value="Expressed in spermatid and 252 other cell types or tissues"/>
</dbReference>
<dbReference type="ExpressionAtlas" id="Q922Q9">
    <property type="expression patterns" value="baseline and differential"/>
</dbReference>
<dbReference type="GO" id="GO:0005615">
    <property type="term" value="C:extracellular space"/>
    <property type="evidence" value="ECO:0007669"/>
    <property type="project" value="Ensembl"/>
</dbReference>
<dbReference type="GO" id="GO:0005770">
    <property type="term" value="C:late endosome"/>
    <property type="evidence" value="ECO:0007669"/>
    <property type="project" value="Ensembl"/>
</dbReference>
<dbReference type="GO" id="GO:0005764">
    <property type="term" value="C:lysosome"/>
    <property type="evidence" value="ECO:0007669"/>
    <property type="project" value="UniProtKB-SubCell"/>
</dbReference>
<dbReference type="GO" id="GO:0005802">
    <property type="term" value="C:trans-Golgi network"/>
    <property type="evidence" value="ECO:0007669"/>
    <property type="project" value="Ensembl"/>
</dbReference>
<dbReference type="GO" id="GO:0008061">
    <property type="term" value="F:chitin binding"/>
    <property type="evidence" value="ECO:0007669"/>
    <property type="project" value="InterPro"/>
</dbReference>
<dbReference type="GO" id="GO:0070492">
    <property type="term" value="F:oligosaccharide binding"/>
    <property type="evidence" value="ECO:0007669"/>
    <property type="project" value="Ensembl"/>
</dbReference>
<dbReference type="GO" id="GO:0005975">
    <property type="term" value="P:carbohydrate metabolic process"/>
    <property type="evidence" value="ECO:0007669"/>
    <property type="project" value="InterPro"/>
</dbReference>
<dbReference type="GO" id="GO:0045087">
    <property type="term" value="P:innate immune response"/>
    <property type="evidence" value="ECO:0007669"/>
    <property type="project" value="UniProtKB-KW"/>
</dbReference>
<dbReference type="GO" id="GO:1900016">
    <property type="term" value="P:negative regulation of cytokine production involved in inflammatory response"/>
    <property type="evidence" value="ECO:0007669"/>
    <property type="project" value="Ensembl"/>
</dbReference>
<dbReference type="CDD" id="cd02876">
    <property type="entry name" value="GH18_SI-CLP"/>
    <property type="match status" value="1"/>
</dbReference>
<dbReference type="FunFam" id="3.20.20.80:FF:000527">
    <property type="entry name" value="Chitinase domain containing 1"/>
    <property type="match status" value="1"/>
</dbReference>
<dbReference type="FunFam" id="1.10.8.360:FF:000001">
    <property type="entry name" value="Chitinase domain-containing protein 1"/>
    <property type="match status" value="1"/>
</dbReference>
<dbReference type="FunFam" id="3.10.50.10:FF:000002">
    <property type="entry name" value="Chitinase domain-containing protein 1"/>
    <property type="match status" value="1"/>
</dbReference>
<dbReference type="Gene3D" id="3.10.50.10">
    <property type="match status" value="1"/>
</dbReference>
<dbReference type="Gene3D" id="1.10.8.360">
    <property type="entry name" value="3,6-anhydro-alpha-l-galactosidase"/>
    <property type="match status" value="1"/>
</dbReference>
<dbReference type="Gene3D" id="3.20.20.80">
    <property type="entry name" value="Glycosidases"/>
    <property type="match status" value="1"/>
</dbReference>
<dbReference type="InterPro" id="IPR011583">
    <property type="entry name" value="Chitinase_II/V-like_cat"/>
</dbReference>
<dbReference type="InterPro" id="IPR029070">
    <property type="entry name" value="Chitinase_insertion_sf"/>
</dbReference>
<dbReference type="InterPro" id="IPR001223">
    <property type="entry name" value="Glyco_hydro18_cat"/>
</dbReference>
<dbReference type="InterPro" id="IPR017853">
    <property type="entry name" value="Glycoside_hydrolase_SF"/>
</dbReference>
<dbReference type="PANTHER" id="PTHR46066:SF2">
    <property type="entry name" value="CHITINASE DOMAIN-CONTAINING PROTEIN 1"/>
    <property type="match status" value="1"/>
</dbReference>
<dbReference type="PANTHER" id="PTHR46066">
    <property type="entry name" value="CHITINASE DOMAIN-CONTAINING PROTEIN 1 FAMILY MEMBER"/>
    <property type="match status" value="1"/>
</dbReference>
<dbReference type="Pfam" id="PF00704">
    <property type="entry name" value="Glyco_hydro_18"/>
    <property type="match status" value="1"/>
</dbReference>
<dbReference type="SMART" id="SM00636">
    <property type="entry name" value="Glyco_18"/>
    <property type="match status" value="1"/>
</dbReference>
<dbReference type="SUPFAM" id="SSF51445">
    <property type="entry name" value="(Trans)glycosidases"/>
    <property type="match status" value="1"/>
</dbReference>
<dbReference type="PROSITE" id="PS51910">
    <property type="entry name" value="GH18_2"/>
    <property type="match status" value="1"/>
</dbReference>
<reference key="1">
    <citation type="journal article" date="2005" name="Science">
        <title>The transcriptional landscape of the mammalian genome.</title>
        <authorList>
            <person name="Carninci P."/>
            <person name="Kasukawa T."/>
            <person name="Katayama S."/>
            <person name="Gough J."/>
            <person name="Frith M.C."/>
            <person name="Maeda N."/>
            <person name="Oyama R."/>
            <person name="Ravasi T."/>
            <person name="Lenhard B."/>
            <person name="Wells C."/>
            <person name="Kodzius R."/>
            <person name="Shimokawa K."/>
            <person name="Bajic V.B."/>
            <person name="Brenner S.E."/>
            <person name="Batalov S."/>
            <person name="Forrest A.R."/>
            <person name="Zavolan M."/>
            <person name="Davis M.J."/>
            <person name="Wilming L.G."/>
            <person name="Aidinis V."/>
            <person name="Allen J.E."/>
            <person name="Ambesi-Impiombato A."/>
            <person name="Apweiler R."/>
            <person name="Aturaliya R.N."/>
            <person name="Bailey T.L."/>
            <person name="Bansal M."/>
            <person name="Baxter L."/>
            <person name="Beisel K.W."/>
            <person name="Bersano T."/>
            <person name="Bono H."/>
            <person name="Chalk A.M."/>
            <person name="Chiu K.P."/>
            <person name="Choudhary V."/>
            <person name="Christoffels A."/>
            <person name="Clutterbuck D.R."/>
            <person name="Crowe M.L."/>
            <person name="Dalla E."/>
            <person name="Dalrymple B.P."/>
            <person name="de Bono B."/>
            <person name="Della Gatta G."/>
            <person name="di Bernardo D."/>
            <person name="Down T."/>
            <person name="Engstrom P."/>
            <person name="Fagiolini M."/>
            <person name="Faulkner G."/>
            <person name="Fletcher C.F."/>
            <person name="Fukushima T."/>
            <person name="Furuno M."/>
            <person name="Futaki S."/>
            <person name="Gariboldi M."/>
            <person name="Georgii-Hemming P."/>
            <person name="Gingeras T.R."/>
            <person name="Gojobori T."/>
            <person name="Green R.E."/>
            <person name="Gustincich S."/>
            <person name="Harbers M."/>
            <person name="Hayashi Y."/>
            <person name="Hensch T.K."/>
            <person name="Hirokawa N."/>
            <person name="Hill D."/>
            <person name="Huminiecki L."/>
            <person name="Iacono M."/>
            <person name="Ikeo K."/>
            <person name="Iwama A."/>
            <person name="Ishikawa T."/>
            <person name="Jakt M."/>
            <person name="Kanapin A."/>
            <person name="Katoh M."/>
            <person name="Kawasawa Y."/>
            <person name="Kelso J."/>
            <person name="Kitamura H."/>
            <person name="Kitano H."/>
            <person name="Kollias G."/>
            <person name="Krishnan S.P."/>
            <person name="Kruger A."/>
            <person name="Kummerfeld S.K."/>
            <person name="Kurochkin I.V."/>
            <person name="Lareau L.F."/>
            <person name="Lazarevic D."/>
            <person name="Lipovich L."/>
            <person name="Liu J."/>
            <person name="Liuni S."/>
            <person name="McWilliam S."/>
            <person name="Madan Babu M."/>
            <person name="Madera M."/>
            <person name="Marchionni L."/>
            <person name="Matsuda H."/>
            <person name="Matsuzawa S."/>
            <person name="Miki H."/>
            <person name="Mignone F."/>
            <person name="Miyake S."/>
            <person name="Morris K."/>
            <person name="Mottagui-Tabar S."/>
            <person name="Mulder N."/>
            <person name="Nakano N."/>
            <person name="Nakauchi H."/>
            <person name="Ng P."/>
            <person name="Nilsson R."/>
            <person name="Nishiguchi S."/>
            <person name="Nishikawa S."/>
            <person name="Nori F."/>
            <person name="Ohara O."/>
            <person name="Okazaki Y."/>
            <person name="Orlando V."/>
            <person name="Pang K.C."/>
            <person name="Pavan W.J."/>
            <person name="Pavesi G."/>
            <person name="Pesole G."/>
            <person name="Petrovsky N."/>
            <person name="Piazza S."/>
            <person name="Reed J."/>
            <person name="Reid J.F."/>
            <person name="Ring B.Z."/>
            <person name="Ringwald M."/>
            <person name="Rost B."/>
            <person name="Ruan Y."/>
            <person name="Salzberg S.L."/>
            <person name="Sandelin A."/>
            <person name="Schneider C."/>
            <person name="Schoenbach C."/>
            <person name="Sekiguchi K."/>
            <person name="Semple C.A."/>
            <person name="Seno S."/>
            <person name="Sessa L."/>
            <person name="Sheng Y."/>
            <person name="Shibata Y."/>
            <person name="Shimada H."/>
            <person name="Shimada K."/>
            <person name="Silva D."/>
            <person name="Sinclair B."/>
            <person name="Sperling S."/>
            <person name="Stupka E."/>
            <person name="Sugiura K."/>
            <person name="Sultana R."/>
            <person name="Takenaka Y."/>
            <person name="Taki K."/>
            <person name="Tammoja K."/>
            <person name="Tan S.L."/>
            <person name="Tang S."/>
            <person name="Taylor M.S."/>
            <person name="Tegner J."/>
            <person name="Teichmann S.A."/>
            <person name="Ueda H.R."/>
            <person name="van Nimwegen E."/>
            <person name="Verardo R."/>
            <person name="Wei C.L."/>
            <person name="Yagi K."/>
            <person name="Yamanishi H."/>
            <person name="Zabarovsky E."/>
            <person name="Zhu S."/>
            <person name="Zimmer A."/>
            <person name="Hide W."/>
            <person name="Bult C."/>
            <person name="Grimmond S.M."/>
            <person name="Teasdale R.D."/>
            <person name="Liu E.T."/>
            <person name="Brusic V."/>
            <person name="Quackenbush J."/>
            <person name="Wahlestedt C."/>
            <person name="Mattick J.S."/>
            <person name="Hume D.A."/>
            <person name="Kai C."/>
            <person name="Sasaki D."/>
            <person name="Tomaru Y."/>
            <person name="Fukuda S."/>
            <person name="Kanamori-Katayama M."/>
            <person name="Suzuki M."/>
            <person name="Aoki J."/>
            <person name="Arakawa T."/>
            <person name="Iida J."/>
            <person name="Imamura K."/>
            <person name="Itoh M."/>
            <person name="Kato T."/>
            <person name="Kawaji H."/>
            <person name="Kawagashira N."/>
            <person name="Kawashima T."/>
            <person name="Kojima M."/>
            <person name="Kondo S."/>
            <person name="Konno H."/>
            <person name="Nakano K."/>
            <person name="Ninomiya N."/>
            <person name="Nishio T."/>
            <person name="Okada M."/>
            <person name="Plessy C."/>
            <person name="Shibata K."/>
            <person name="Shiraki T."/>
            <person name="Suzuki S."/>
            <person name="Tagami M."/>
            <person name="Waki K."/>
            <person name="Watahiki A."/>
            <person name="Okamura-Oho Y."/>
            <person name="Suzuki H."/>
            <person name="Kawai J."/>
            <person name="Hayashizaki Y."/>
        </authorList>
    </citation>
    <scope>NUCLEOTIDE SEQUENCE [LARGE SCALE MRNA] (ISOFORMS 1 AND 2)</scope>
    <source>
        <strain>C57BL/6J</strain>
        <tissue>Head</tissue>
        <tissue>Pancreas</tissue>
        <tissue>Thymus</tissue>
    </source>
</reference>
<reference key="2">
    <citation type="journal article" date="2004" name="Genome Res.">
        <title>The status, quality, and expansion of the NIH full-length cDNA project: the Mammalian Gene Collection (MGC).</title>
        <authorList>
            <consortium name="The MGC Project Team"/>
        </authorList>
    </citation>
    <scope>NUCLEOTIDE SEQUENCE [LARGE SCALE MRNA] (ISOFORM 1)</scope>
    <source>
        <strain>FVB/N</strain>
        <tissue>Brain</tissue>
        <tissue>Mammary tumor</tissue>
    </source>
</reference>
<reference key="3">
    <citation type="journal article" date="2010" name="Cell">
        <title>A tissue-specific atlas of mouse protein phosphorylation and expression.</title>
        <authorList>
            <person name="Huttlin E.L."/>
            <person name="Jedrychowski M.P."/>
            <person name="Elias J.E."/>
            <person name="Goswami T."/>
            <person name="Rad R."/>
            <person name="Beausoleil S.A."/>
            <person name="Villen J."/>
            <person name="Haas W."/>
            <person name="Sowa M.E."/>
            <person name="Gygi S.P."/>
        </authorList>
    </citation>
    <scope>IDENTIFICATION BY MASS SPECTROMETRY [LARGE SCALE ANALYSIS]</scope>
    <source>
        <tissue>Brain</tissue>
        <tissue>Brown adipose tissue</tissue>
        <tissue>Heart</tissue>
        <tissue>Kidney</tissue>
        <tissue>Liver</tissue>
        <tissue>Lung</tissue>
        <tissue>Spleen</tissue>
        <tissue>Testis</tissue>
    </source>
</reference>